<reference key="1">
    <citation type="journal article" date="2009" name="Nat. Genet.">
        <title>Comparative genomic and phylogeographic analysis of Mycobacterium leprae.</title>
        <authorList>
            <person name="Monot M."/>
            <person name="Honore N."/>
            <person name="Garnier T."/>
            <person name="Zidane N."/>
            <person name="Sherafi D."/>
            <person name="Paniz-Mondolfi A."/>
            <person name="Matsuoka M."/>
            <person name="Taylor G.M."/>
            <person name="Donoghue H.D."/>
            <person name="Bouwman A."/>
            <person name="Mays S."/>
            <person name="Watson C."/>
            <person name="Lockwood D."/>
            <person name="Khamispour A."/>
            <person name="Dowlati Y."/>
            <person name="Jianping S."/>
            <person name="Rea T.H."/>
            <person name="Vera-Cabrera L."/>
            <person name="Stefani M.M."/>
            <person name="Banu S."/>
            <person name="Macdonald M."/>
            <person name="Sapkota B.R."/>
            <person name="Spencer J.S."/>
            <person name="Thomas J."/>
            <person name="Harshman K."/>
            <person name="Singh P."/>
            <person name="Busso P."/>
            <person name="Gattiker A."/>
            <person name="Rougemont J."/>
            <person name="Brennan P.J."/>
            <person name="Cole S.T."/>
        </authorList>
    </citation>
    <scope>NUCLEOTIDE SEQUENCE [LARGE SCALE GENOMIC DNA]</scope>
    <source>
        <strain>Br4923</strain>
    </source>
</reference>
<proteinExistence type="inferred from homology"/>
<organism>
    <name type="scientific">Mycobacterium leprae (strain Br4923)</name>
    <dbReference type="NCBI Taxonomy" id="561304"/>
    <lineage>
        <taxon>Bacteria</taxon>
        <taxon>Bacillati</taxon>
        <taxon>Actinomycetota</taxon>
        <taxon>Actinomycetes</taxon>
        <taxon>Mycobacteriales</taxon>
        <taxon>Mycobacteriaceae</taxon>
        <taxon>Mycobacterium</taxon>
    </lineage>
</organism>
<protein>
    <recommendedName>
        <fullName evidence="1">Polyribonucleotide nucleotidyltransferase</fullName>
        <ecNumber evidence="1">2.7.7.8</ecNumber>
    </recommendedName>
    <alternativeName>
        <fullName evidence="1">Polynucleotide phosphorylase</fullName>
        <shortName evidence="1">PNPase</shortName>
    </alternativeName>
</protein>
<gene>
    <name evidence="1" type="primary">pnp</name>
    <name type="ordered locus">MLBr00854</name>
</gene>
<feature type="chain" id="PRO_1000185747" description="Polyribonucleotide nucleotidyltransferase">
    <location>
        <begin position="1"/>
        <end position="773"/>
    </location>
</feature>
<feature type="domain" description="KH" evidence="1">
    <location>
        <begin position="598"/>
        <end position="657"/>
    </location>
</feature>
<feature type="domain" description="S1 motif" evidence="1">
    <location>
        <begin position="669"/>
        <end position="738"/>
    </location>
</feature>
<feature type="region of interest" description="Disordered" evidence="2">
    <location>
        <begin position="749"/>
        <end position="773"/>
    </location>
</feature>
<feature type="binding site" evidence="1">
    <location>
        <position position="532"/>
    </location>
    <ligand>
        <name>Mg(2+)</name>
        <dbReference type="ChEBI" id="CHEBI:18420"/>
    </ligand>
</feature>
<feature type="binding site" evidence="1">
    <location>
        <position position="538"/>
    </location>
    <ligand>
        <name>Mg(2+)</name>
        <dbReference type="ChEBI" id="CHEBI:18420"/>
    </ligand>
</feature>
<name>PNP_MYCLB</name>
<accession>B8ZQJ6</accession>
<evidence type="ECO:0000255" key="1">
    <source>
        <dbReference type="HAMAP-Rule" id="MF_01595"/>
    </source>
</evidence>
<evidence type="ECO:0000256" key="2">
    <source>
        <dbReference type="SAM" id="MobiDB-lite"/>
    </source>
</evidence>
<sequence>MSVAEIEEGVFEATVTIDNGSFGTRAIRFETGRLALQAAGAVVAYLDADNMLLSATTASKNPKEQFDFFPLTVDVEERMYAAGRIPGSFFRREGRPSTDAILTCRLIDRPLRPSFVDGLRNEIQVVVTILSVDPNDLYDVLAINAASASTQLGGLPFSGPIGGVRVALIDGTWVAFPTVEQLERAVFDMVIAGRIVGTDDEGKPDVAIMMVEAEATENVIELVECGAQAPTESIVAQGLEVAKPFIAALCTAQQELADVVSSRQAKPPVEYPTFPDYGDDVYYSVASMATDELAAALTIGAKLERDQRTNEIKTQVLERLAGTYEGREKELGAAFRSLTKKLVRQRILTNHFRIDGRGITDIRALSAEVAVVPRAHGSALFERGETQILGVTTLDMVKMAQQIDSLGPETSKRYMHHYNFPPFSTGETGRVGSPKRREIGHGALAERALVPVLPSVEEFPYAIRQVSEALGSNGSTSMGSVCASTLALLNAGVPLKAPVAGIAMGLVSDDVEFDGGTERRFVTLTDILGAEDAFGDMDFKCAGTKDFVTALQLDTKLDGIPSQVLAGALAQAKDARLTILEVMAEAIDRPDEMSPYAPRVITIKVPVDKIGEVIGPKGKVINAITEETGAQISIEDDGTVFVGATDGLSAQAAINKINAIANPQLPTVGERFLGTVVKITEFGAFVSLLPGRDGLVHISKLGKGKRIAKVEDVVNVGDKLRVEIADIEKRGKISLVLVADDDSATVPAAPADAGAAQEFGSGTAPADAATASS</sequence>
<keyword id="KW-0963">Cytoplasm</keyword>
<keyword id="KW-0460">Magnesium</keyword>
<keyword id="KW-0479">Metal-binding</keyword>
<keyword id="KW-0548">Nucleotidyltransferase</keyword>
<keyword id="KW-0694">RNA-binding</keyword>
<keyword id="KW-0808">Transferase</keyword>
<dbReference type="EC" id="2.7.7.8" evidence="1"/>
<dbReference type="EMBL" id="FM211192">
    <property type="protein sequence ID" value="CAR70949.1"/>
    <property type="molecule type" value="Genomic_DNA"/>
</dbReference>
<dbReference type="SMR" id="B8ZQJ6"/>
<dbReference type="KEGG" id="mlb:MLBr00854"/>
<dbReference type="HOGENOM" id="CLU_004217_2_2_11"/>
<dbReference type="Proteomes" id="UP000006900">
    <property type="component" value="Chromosome"/>
</dbReference>
<dbReference type="GO" id="GO:0005829">
    <property type="term" value="C:cytosol"/>
    <property type="evidence" value="ECO:0007669"/>
    <property type="project" value="TreeGrafter"/>
</dbReference>
<dbReference type="GO" id="GO:0000175">
    <property type="term" value="F:3'-5'-RNA exonuclease activity"/>
    <property type="evidence" value="ECO:0007669"/>
    <property type="project" value="TreeGrafter"/>
</dbReference>
<dbReference type="GO" id="GO:0000287">
    <property type="term" value="F:magnesium ion binding"/>
    <property type="evidence" value="ECO:0007669"/>
    <property type="project" value="UniProtKB-UniRule"/>
</dbReference>
<dbReference type="GO" id="GO:0004654">
    <property type="term" value="F:polyribonucleotide nucleotidyltransferase activity"/>
    <property type="evidence" value="ECO:0007669"/>
    <property type="project" value="UniProtKB-UniRule"/>
</dbReference>
<dbReference type="GO" id="GO:0003723">
    <property type="term" value="F:RNA binding"/>
    <property type="evidence" value="ECO:0007669"/>
    <property type="project" value="UniProtKB-UniRule"/>
</dbReference>
<dbReference type="GO" id="GO:0006402">
    <property type="term" value="P:mRNA catabolic process"/>
    <property type="evidence" value="ECO:0007669"/>
    <property type="project" value="UniProtKB-UniRule"/>
</dbReference>
<dbReference type="GO" id="GO:0006396">
    <property type="term" value="P:RNA processing"/>
    <property type="evidence" value="ECO:0007669"/>
    <property type="project" value="InterPro"/>
</dbReference>
<dbReference type="CDD" id="cd02393">
    <property type="entry name" value="KH-I_PNPase"/>
    <property type="match status" value="1"/>
</dbReference>
<dbReference type="CDD" id="cd11364">
    <property type="entry name" value="RNase_PH_PNPase_2"/>
    <property type="match status" value="1"/>
</dbReference>
<dbReference type="CDD" id="cd04472">
    <property type="entry name" value="S1_PNPase"/>
    <property type="match status" value="1"/>
</dbReference>
<dbReference type="FunFam" id="2.40.50.140:FF:000069">
    <property type="entry name" value="Polyribonucleotide nucleotidyltransferase"/>
    <property type="match status" value="1"/>
</dbReference>
<dbReference type="FunFam" id="3.30.1370.10:FF:000001">
    <property type="entry name" value="Polyribonucleotide nucleotidyltransferase"/>
    <property type="match status" value="1"/>
</dbReference>
<dbReference type="FunFam" id="3.30.230.70:FF:000001">
    <property type="entry name" value="Polyribonucleotide nucleotidyltransferase"/>
    <property type="match status" value="1"/>
</dbReference>
<dbReference type="FunFam" id="3.30.230.70:FF:000002">
    <property type="entry name" value="Polyribonucleotide nucleotidyltransferase"/>
    <property type="match status" value="1"/>
</dbReference>
<dbReference type="Gene3D" id="3.30.230.70">
    <property type="entry name" value="GHMP Kinase, N-terminal domain"/>
    <property type="match status" value="2"/>
</dbReference>
<dbReference type="Gene3D" id="3.30.1370.10">
    <property type="entry name" value="K Homology domain, type 1"/>
    <property type="match status" value="1"/>
</dbReference>
<dbReference type="Gene3D" id="2.40.50.140">
    <property type="entry name" value="Nucleic acid-binding proteins"/>
    <property type="match status" value="1"/>
</dbReference>
<dbReference type="HAMAP" id="MF_01595">
    <property type="entry name" value="PNPase"/>
    <property type="match status" value="1"/>
</dbReference>
<dbReference type="InterPro" id="IPR001247">
    <property type="entry name" value="ExoRNase_PH_dom1"/>
</dbReference>
<dbReference type="InterPro" id="IPR036345">
    <property type="entry name" value="ExoRNase_PH_dom2_sf"/>
</dbReference>
<dbReference type="InterPro" id="IPR014069">
    <property type="entry name" value="GPSI/PNP"/>
</dbReference>
<dbReference type="InterPro" id="IPR004087">
    <property type="entry name" value="KH_dom"/>
</dbReference>
<dbReference type="InterPro" id="IPR004088">
    <property type="entry name" value="KH_dom_type_1"/>
</dbReference>
<dbReference type="InterPro" id="IPR036612">
    <property type="entry name" value="KH_dom_type_1_sf"/>
</dbReference>
<dbReference type="InterPro" id="IPR012340">
    <property type="entry name" value="NA-bd_OB-fold"/>
</dbReference>
<dbReference type="InterPro" id="IPR012162">
    <property type="entry name" value="PNPase"/>
</dbReference>
<dbReference type="InterPro" id="IPR027408">
    <property type="entry name" value="PNPase/RNase_PH_dom_sf"/>
</dbReference>
<dbReference type="InterPro" id="IPR015848">
    <property type="entry name" value="PNPase_PH_RNA-bd_bac/org-type"/>
</dbReference>
<dbReference type="InterPro" id="IPR036456">
    <property type="entry name" value="PNPase_PH_RNA-bd_sf"/>
</dbReference>
<dbReference type="InterPro" id="IPR020568">
    <property type="entry name" value="Ribosomal_Su5_D2-typ_SF"/>
</dbReference>
<dbReference type="InterPro" id="IPR003029">
    <property type="entry name" value="S1_domain"/>
</dbReference>
<dbReference type="NCBIfam" id="TIGR03591">
    <property type="entry name" value="polynuc_phos"/>
    <property type="match status" value="1"/>
</dbReference>
<dbReference type="NCBIfam" id="TIGR02696">
    <property type="entry name" value="pppGpp_PNP"/>
    <property type="match status" value="1"/>
</dbReference>
<dbReference type="NCBIfam" id="NF008805">
    <property type="entry name" value="PRK11824.1"/>
    <property type="match status" value="1"/>
</dbReference>
<dbReference type="PANTHER" id="PTHR11252">
    <property type="entry name" value="POLYRIBONUCLEOTIDE NUCLEOTIDYLTRANSFERASE"/>
    <property type="match status" value="1"/>
</dbReference>
<dbReference type="PANTHER" id="PTHR11252:SF0">
    <property type="entry name" value="POLYRIBONUCLEOTIDE NUCLEOTIDYLTRANSFERASE 1, MITOCHONDRIAL"/>
    <property type="match status" value="1"/>
</dbReference>
<dbReference type="Pfam" id="PF00013">
    <property type="entry name" value="KH_1"/>
    <property type="match status" value="1"/>
</dbReference>
<dbReference type="Pfam" id="PF03726">
    <property type="entry name" value="PNPase"/>
    <property type="match status" value="1"/>
</dbReference>
<dbReference type="Pfam" id="PF01138">
    <property type="entry name" value="RNase_PH"/>
    <property type="match status" value="2"/>
</dbReference>
<dbReference type="Pfam" id="PF00575">
    <property type="entry name" value="S1"/>
    <property type="match status" value="1"/>
</dbReference>
<dbReference type="PIRSF" id="PIRSF005499">
    <property type="entry name" value="PNPase"/>
    <property type="match status" value="1"/>
</dbReference>
<dbReference type="SMART" id="SM00322">
    <property type="entry name" value="KH"/>
    <property type="match status" value="1"/>
</dbReference>
<dbReference type="SMART" id="SM00316">
    <property type="entry name" value="S1"/>
    <property type="match status" value="1"/>
</dbReference>
<dbReference type="SUPFAM" id="SSF54791">
    <property type="entry name" value="Eukaryotic type KH-domain (KH-domain type I)"/>
    <property type="match status" value="1"/>
</dbReference>
<dbReference type="SUPFAM" id="SSF50249">
    <property type="entry name" value="Nucleic acid-binding proteins"/>
    <property type="match status" value="1"/>
</dbReference>
<dbReference type="SUPFAM" id="SSF46915">
    <property type="entry name" value="Polynucleotide phosphorylase/guanosine pentaphosphate synthase (PNPase/GPSI), domain 3"/>
    <property type="match status" value="1"/>
</dbReference>
<dbReference type="SUPFAM" id="SSF55666">
    <property type="entry name" value="Ribonuclease PH domain 2-like"/>
    <property type="match status" value="2"/>
</dbReference>
<dbReference type="SUPFAM" id="SSF54211">
    <property type="entry name" value="Ribosomal protein S5 domain 2-like"/>
    <property type="match status" value="2"/>
</dbReference>
<dbReference type="PROSITE" id="PS50084">
    <property type="entry name" value="KH_TYPE_1"/>
    <property type="match status" value="1"/>
</dbReference>
<dbReference type="PROSITE" id="PS50126">
    <property type="entry name" value="S1"/>
    <property type="match status" value="1"/>
</dbReference>
<comment type="function">
    <text evidence="1">Involved in mRNA degradation. Catalyzes the phosphorolysis of single-stranded polyribonucleotides processively in the 3'- to 5'-direction.</text>
</comment>
<comment type="catalytic activity">
    <reaction evidence="1">
        <text>RNA(n+1) + phosphate = RNA(n) + a ribonucleoside 5'-diphosphate</text>
        <dbReference type="Rhea" id="RHEA:22096"/>
        <dbReference type="Rhea" id="RHEA-COMP:14527"/>
        <dbReference type="Rhea" id="RHEA-COMP:17342"/>
        <dbReference type="ChEBI" id="CHEBI:43474"/>
        <dbReference type="ChEBI" id="CHEBI:57930"/>
        <dbReference type="ChEBI" id="CHEBI:140395"/>
        <dbReference type="EC" id="2.7.7.8"/>
    </reaction>
</comment>
<comment type="cofactor">
    <cofactor evidence="1">
        <name>Mg(2+)</name>
        <dbReference type="ChEBI" id="CHEBI:18420"/>
    </cofactor>
</comment>
<comment type="subcellular location">
    <subcellularLocation>
        <location evidence="1">Cytoplasm</location>
    </subcellularLocation>
</comment>
<comment type="similarity">
    <text evidence="1">Belongs to the polyribonucleotide nucleotidyltransferase family.</text>
</comment>